<dbReference type="EMBL" id="AE014133">
    <property type="protein sequence ID" value="AAN58429.1"/>
    <property type="molecule type" value="Genomic_DNA"/>
</dbReference>
<dbReference type="RefSeq" id="NP_721123.1">
    <property type="nucleotide sequence ID" value="NC_004350.2"/>
</dbReference>
<dbReference type="RefSeq" id="WP_002263328.1">
    <property type="nucleotide sequence ID" value="NC_004350.2"/>
</dbReference>
<dbReference type="SMR" id="Q8DV22"/>
<dbReference type="STRING" id="210007.SMU_697"/>
<dbReference type="GeneID" id="93859750"/>
<dbReference type="KEGG" id="smu:SMU_697"/>
<dbReference type="PATRIC" id="fig|210007.7.peg.619"/>
<dbReference type="eggNOG" id="COG0290">
    <property type="taxonomic scope" value="Bacteria"/>
</dbReference>
<dbReference type="HOGENOM" id="CLU_054919_3_2_9"/>
<dbReference type="OrthoDB" id="9806014at2"/>
<dbReference type="PhylomeDB" id="Q8DV22"/>
<dbReference type="Proteomes" id="UP000002512">
    <property type="component" value="Chromosome"/>
</dbReference>
<dbReference type="GO" id="GO:0005829">
    <property type="term" value="C:cytosol"/>
    <property type="evidence" value="ECO:0007669"/>
    <property type="project" value="TreeGrafter"/>
</dbReference>
<dbReference type="GO" id="GO:0016020">
    <property type="term" value="C:membrane"/>
    <property type="evidence" value="ECO:0007669"/>
    <property type="project" value="TreeGrafter"/>
</dbReference>
<dbReference type="GO" id="GO:0043022">
    <property type="term" value="F:ribosome binding"/>
    <property type="evidence" value="ECO:0007669"/>
    <property type="project" value="TreeGrafter"/>
</dbReference>
<dbReference type="GO" id="GO:0003743">
    <property type="term" value="F:translation initiation factor activity"/>
    <property type="evidence" value="ECO:0007669"/>
    <property type="project" value="UniProtKB-UniRule"/>
</dbReference>
<dbReference type="GO" id="GO:0032790">
    <property type="term" value="P:ribosome disassembly"/>
    <property type="evidence" value="ECO:0007669"/>
    <property type="project" value="TreeGrafter"/>
</dbReference>
<dbReference type="FunFam" id="3.10.20.80:FF:000001">
    <property type="entry name" value="Translation initiation factor IF-3"/>
    <property type="match status" value="1"/>
</dbReference>
<dbReference type="FunFam" id="3.30.110.10:FF:000001">
    <property type="entry name" value="Translation initiation factor IF-3"/>
    <property type="match status" value="1"/>
</dbReference>
<dbReference type="Gene3D" id="3.30.110.10">
    <property type="entry name" value="Translation initiation factor 3 (IF-3), C-terminal domain"/>
    <property type="match status" value="1"/>
</dbReference>
<dbReference type="Gene3D" id="3.10.20.80">
    <property type="entry name" value="Translation initiation factor 3 (IF-3), N-terminal domain"/>
    <property type="match status" value="1"/>
</dbReference>
<dbReference type="HAMAP" id="MF_00080">
    <property type="entry name" value="IF_3"/>
    <property type="match status" value="1"/>
</dbReference>
<dbReference type="InterPro" id="IPR036788">
    <property type="entry name" value="T_IF-3_C_sf"/>
</dbReference>
<dbReference type="InterPro" id="IPR036787">
    <property type="entry name" value="T_IF-3_N_sf"/>
</dbReference>
<dbReference type="InterPro" id="IPR019813">
    <property type="entry name" value="Translation_initiation_fac3_CS"/>
</dbReference>
<dbReference type="InterPro" id="IPR001288">
    <property type="entry name" value="Translation_initiation_fac_3"/>
</dbReference>
<dbReference type="InterPro" id="IPR019815">
    <property type="entry name" value="Translation_initiation_fac_3_C"/>
</dbReference>
<dbReference type="InterPro" id="IPR019814">
    <property type="entry name" value="Translation_initiation_fac_3_N"/>
</dbReference>
<dbReference type="NCBIfam" id="TIGR00168">
    <property type="entry name" value="infC"/>
    <property type="match status" value="1"/>
</dbReference>
<dbReference type="PANTHER" id="PTHR10938">
    <property type="entry name" value="TRANSLATION INITIATION FACTOR IF-3"/>
    <property type="match status" value="1"/>
</dbReference>
<dbReference type="PANTHER" id="PTHR10938:SF0">
    <property type="entry name" value="TRANSLATION INITIATION FACTOR IF-3, MITOCHONDRIAL"/>
    <property type="match status" value="1"/>
</dbReference>
<dbReference type="Pfam" id="PF00707">
    <property type="entry name" value="IF3_C"/>
    <property type="match status" value="1"/>
</dbReference>
<dbReference type="Pfam" id="PF05198">
    <property type="entry name" value="IF3_N"/>
    <property type="match status" value="1"/>
</dbReference>
<dbReference type="SUPFAM" id="SSF55200">
    <property type="entry name" value="Translation initiation factor IF3, C-terminal domain"/>
    <property type="match status" value="1"/>
</dbReference>
<dbReference type="SUPFAM" id="SSF54364">
    <property type="entry name" value="Translation initiation factor IF3, N-terminal domain"/>
    <property type="match status" value="1"/>
</dbReference>
<dbReference type="PROSITE" id="PS00938">
    <property type="entry name" value="IF3"/>
    <property type="match status" value="1"/>
</dbReference>
<keyword id="KW-0963">Cytoplasm</keyword>
<keyword id="KW-0396">Initiation factor</keyword>
<keyword id="KW-0648">Protein biosynthesis</keyword>
<keyword id="KW-1185">Reference proteome</keyword>
<feature type="chain" id="PRO_0000177587" description="Translation initiation factor IF-3">
    <location>
        <begin position="1"/>
        <end position="176"/>
    </location>
</feature>
<evidence type="ECO:0000255" key="1">
    <source>
        <dbReference type="HAMAP-Rule" id="MF_00080"/>
    </source>
</evidence>
<protein>
    <recommendedName>
        <fullName evidence="1">Translation initiation factor IF-3</fullName>
    </recommendedName>
</protein>
<organism>
    <name type="scientific">Streptococcus mutans serotype c (strain ATCC 700610 / UA159)</name>
    <dbReference type="NCBI Taxonomy" id="210007"/>
    <lineage>
        <taxon>Bacteria</taxon>
        <taxon>Bacillati</taxon>
        <taxon>Bacillota</taxon>
        <taxon>Bacilli</taxon>
        <taxon>Lactobacillales</taxon>
        <taxon>Streptococcaceae</taxon>
        <taxon>Streptococcus</taxon>
    </lineage>
</organism>
<gene>
    <name evidence="1" type="primary">infC</name>
    <name type="ordered locus">SMU_697</name>
</gene>
<sequence length="176" mass="20103">MKNIAKKDLFINNEIRVREVRLIGLDGEQLGIKPLAQAQAIADDANVDLVLIQPQATPPVARIMDYGKFKFEYQKKQKEQRKKQSVVTIKEVRLSPVIDKGDFETKLRNGRKFLEKGNKVKVSIRFKGRMITHKEIGAKVLADFAEATQDIAIIEQRAKMDGRQMFMQLAPIPDKK</sequence>
<proteinExistence type="inferred from homology"/>
<accession>Q8DV22</accession>
<comment type="function">
    <text evidence="1">IF-3 binds to the 30S ribosomal subunit and shifts the equilibrium between 70S ribosomes and their 50S and 30S subunits in favor of the free subunits, thus enhancing the availability of 30S subunits on which protein synthesis initiation begins.</text>
</comment>
<comment type="subunit">
    <text evidence="1">Monomer.</text>
</comment>
<comment type="subcellular location">
    <subcellularLocation>
        <location evidence="1">Cytoplasm</location>
    </subcellularLocation>
</comment>
<comment type="similarity">
    <text evidence="1">Belongs to the IF-3 family.</text>
</comment>
<reference key="1">
    <citation type="journal article" date="2002" name="Proc. Natl. Acad. Sci. U.S.A.">
        <title>Genome sequence of Streptococcus mutans UA159, a cariogenic dental pathogen.</title>
        <authorList>
            <person name="Ajdic D.J."/>
            <person name="McShan W.M."/>
            <person name="McLaughlin R.E."/>
            <person name="Savic G."/>
            <person name="Chang J."/>
            <person name="Carson M.B."/>
            <person name="Primeaux C."/>
            <person name="Tian R."/>
            <person name="Kenton S."/>
            <person name="Jia H.G."/>
            <person name="Lin S.P."/>
            <person name="Qian Y."/>
            <person name="Li S."/>
            <person name="Zhu H."/>
            <person name="Najar F.Z."/>
            <person name="Lai H."/>
            <person name="White J."/>
            <person name="Roe B.A."/>
            <person name="Ferretti J.J."/>
        </authorList>
    </citation>
    <scope>NUCLEOTIDE SEQUENCE [LARGE SCALE GENOMIC DNA]</scope>
    <source>
        <strain>ATCC 700610 / UA159</strain>
    </source>
</reference>
<name>IF3_STRMU</name>